<gene>
    <name type="ORF">ORF61b</name>
</gene>
<sequence length="61" mass="7183">MANFLGISDLLGQILKALTRITFDVLFTLAKYVIRGFGHWIMDTFRYLNDFTVWITRLAKR</sequence>
<accession>A4ZUA8</accession>
<dbReference type="EMBL" id="EF432053">
    <property type="protein sequence ID" value="ABP73412.1"/>
    <property type="molecule type" value="Genomic_DNA"/>
</dbReference>
<dbReference type="RefSeq" id="YP_001210326.1">
    <property type="nucleotide sequence ID" value="NC_009452.1"/>
</dbReference>
<dbReference type="GeneID" id="5129849"/>
<dbReference type="KEGG" id="vg:5129849"/>
<dbReference type="Proteomes" id="UP000000513">
    <property type="component" value="Segment"/>
</dbReference>
<organismHost>
    <name type="scientific">Acidianus convivator</name>
    <dbReference type="NCBI Taxonomy" id="269667"/>
</organismHost>
<name>Y061B_ABVP</name>
<feature type="chain" id="PRO_0000384830" description="Uncharacterized protein ORF61b">
    <location>
        <begin position="1"/>
        <end position="61"/>
    </location>
</feature>
<proteinExistence type="predicted"/>
<protein>
    <recommendedName>
        <fullName>Uncharacterized protein ORF61b</fullName>
    </recommendedName>
</protein>
<organism>
    <name type="scientific">Acidianus bottle-shaped virus (isolate Italy/Pozzuoli)</name>
    <name type="common">ABV</name>
    <dbReference type="NCBI Taxonomy" id="654911"/>
    <lineage>
        <taxon>Viruses</taxon>
        <taxon>Viruses incertae sedis</taxon>
        <taxon>Ampullaviridae</taxon>
        <taxon>Bottigliavirus</taxon>
        <taxon>Bottigliavirus ABV</taxon>
    </lineage>
</organism>
<keyword id="KW-1185">Reference proteome</keyword>
<reference key="1">
    <citation type="journal article" date="2007" name="Virology">
        <title>Genome of the Acidianus bottle-shaped virus and insights into the replication and packaging mechanisms.</title>
        <authorList>
            <person name="Peng X."/>
            <person name="Basta T."/>
            <person name="Haring M."/>
            <person name="Garrett R.A."/>
            <person name="Prangishvili D."/>
        </authorList>
    </citation>
    <scope>NUCLEOTIDE SEQUENCE [GENOMIC DNA]</scope>
</reference>